<protein>
    <recommendedName>
        <fullName evidence="1">Small ribosomal subunit protein uS14c</fullName>
    </recommendedName>
    <alternativeName>
        <fullName evidence="2">30S ribosomal protein S14, chloroplastic</fullName>
    </alternativeName>
</protein>
<keyword id="KW-0150">Chloroplast</keyword>
<keyword id="KW-0934">Plastid</keyword>
<keyword id="KW-0687">Ribonucleoprotein</keyword>
<keyword id="KW-0689">Ribosomal protein</keyword>
<keyword id="KW-0694">RNA-binding</keyword>
<keyword id="KW-0699">rRNA-binding</keyword>
<gene>
    <name evidence="1" type="primary">rps14</name>
</gene>
<dbReference type="EMBL" id="AY916449">
    <property type="protein sequence ID" value="AAW82501.1"/>
    <property type="molecule type" value="Genomic_DNA"/>
</dbReference>
<dbReference type="RefSeq" id="YP_358576.1">
    <property type="nucleotide sequence ID" value="NC_007499.1"/>
</dbReference>
<dbReference type="SMR" id="Q3BAP2"/>
<dbReference type="GeneID" id="3741674"/>
<dbReference type="GO" id="GO:0009507">
    <property type="term" value="C:chloroplast"/>
    <property type="evidence" value="ECO:0007669"/>
    <property type="project" value="UniProtKB-SubCell"/>
</dbReference>
<dbReference type="GO" id="GO:0015935">
    <property type="term" value="C:small ribosomal subunit"/>
    <property type="evidence" value="ECO:0007669"/>
    <property type="project" value="TreeGrafter"/>
</dbReference>
<dbReference type="GO" id="GO:0019843">
    <property type="term" value="F:rRNA binding"/>
    <property type="evidence" value="ECO:0007669"/>
    <property type="project" value="UniProtKB-UniRule"/>
</dbReference>
<dbReference type="GO" id="GO:0003735">
    <property type="term" value="F:structural constituent of ribosome"/>
    <property type="evidence" value="ECO:0007669"/>
    <property type="project" value="InterPro"/>
</dbReference>
<dbReference type="GO" id="GO:0006412">
    <property type="term" value="P:translation"/>
    <property type="evidence" value="ECO:0007669"/>
    <property type="project" value="UniProtKB-UniRule"/>
</dbReference>
<dbReference type="FunFam" id="1.10.287.1480:FF:000001">
    <property type="entry name" value="30S ribosomal protein S14"/>
    <property type="match status" value="1"/>
</dbReference>
<dbReference type="Gene3D" id="1.10.287.1480">
    <property type="match status" value="1"/>
</dbReference>
<dbReference type="HAMAP" id="MF_00537">
    <property type="entry name" value="Ribosomal_uS14_1"/>
    <property type="match status" value="1"/>
</dbReference>
<dbReference type="InterPro" id="IPR001209">
    <property type="entry name" value="Ribosomal_uS14"/>
</dbReference>
<dbReference type="InterPro" id="IPR023036">
    <property type="entry name" value="Ribosomal_uS14_bac/plastid"/>
</dbReference>
<dbReference type="InterPro" id="IPR018271">
    <property type="entry name" value="Ribosomal_uS14_CS"/>
</dbReference>
<dbReference type="NCBIfam" id="NF006477">
    <property type="entry name" value="PRK08881.1"/>
    <property type="match status" value="1"/>
</dbReference>
<dbReference type="PANTHER" id="PTHR19836">
    <property type="entry name" value="30S RIBOSOMAL PROTEIN S14"/>
    <property type="match status" value="1"/>
</dbReference>
<dbReference type="PANTHER" id="PTHR19836:SF19">
    <property type="entry name" value="SMALL RIBOSOMAL SUBUNIT PROTEIN US14M"/>
    <property type="match status" value="1"/>
</dbReference>
<dbReference type="Pfam" id="PF00253">
    <property type="entry name" value="Ribosomal_S14"/>
    <property type="match status" value="1"/>
</dbReference>
<dbReference type="SUPFAM" id="SSF57716">
    <property type="entry name" value="Glucocorticoid receptor-like (DNA-binding domain)"/>
    <property type="match status" value="1"/>
</dbReference>
<dbReference type="PROSITE" id="PS00527">
    <property type="entry name" value="RIBOSOMAL_S14"/>
    <property type="match status" value="1"/>
</dbReference>
<name>RR14_PHAAO</name>
<comment type="function">
    <text evidence="1">Binds 16S rRNA, required for the assembly of 30S particles.</text>
</comment>
<comment type="subunit">
    <text evidence="1">Part of the 30S ribosomal subunit.</text>
</comment>
<comment type="subcellular location">
    <subcellularLocation>
        <location>Plastid</location>
        <location>Chloroplast</location>
    </subcellularLocation>
</comment>
<comment type="similarity">
    <text evidence="1">Belongs to the universal ribosomal protein uS14 family.</text>
</comment>
<sequence>MARKSLIQREKKRQKLEQKYYWIRQSLKKEISKVPSLREQWKIHGKLQSSPRNSAPIRLHRRCFLTGRPRANYRDFGLSGHILREMVHACLLPGATRSSW</sequence>
<evidence type="ECO:0000255" key="1">
    <source>
        <dbReference type="HAMAP-Rule" id="MF_00537"/>
    </source>
</evidence>
<evidence type="ECO:0000305" key="2"/>
<feature type="chain" id="PRO_0000276695" description="Small ribosomal subunit protein uS14c">
    <location>
        <begin position="1"/>
        <end position="100"/>
    </location>
</feature>
<organism>
    <name type="scientific">Phalaenopsis aphrodite subsp. formosana</name>
    <name type="common">Moth orchid</name>
    <dbReference type="NCBI Taxonomy" id="308872"/>
    <lineage>
        <taxon>Eukaryota</taxon>
        <taxon>Viridiplantae</taxon>
        <taxon>Streptophyta</taxon>
        <taxon>Embryophyta</taxon>
        <taxon>Tracheophyta</taxon>
        <taxon>Spermatophyta</taxon>
        <taxon>Magnoliopsida</taxon>
        <taxon>Liliopsida</taxon>
        <taxon>Asparagales</taxon>
        <taxon>Orchidaceae</taxon>
        <taxon>Epidendroideae</taxon>
        <taxon>Vandeae</taxon>
        <taxon>Aeridinae</taxon>
        <taxon>Phalaenopsis</taxon>
    </lineage>
</organism>
<accession>Q3BAP2</accession>
<proteinExistence type="inferred from homology"/>
<geneLocation type="chloroplast"/>
<reference key="1">
    <citation type="journal article" date="2006" name="Mol. Biol. Evol.">
        <title>The chloroplast genome of Phalaenopsis aphrodite (Orchidaceae): comparative analysis of evolutionary rate with that of grasses and its phylogenetic implications.</title>
        <authorList>
            <person name="Chang C.-C."/>
            <person name="Lin H.-C."/>
            <person name="Lin I.-P."/>
            <person name="Chow T.-Y."/>
            <person name="Chen H.-H."/>
            <person name="Chen W.-H."/>
            <person name="Cheng C.-H."/>
            <person name="Lin C.-Y."/>
            <person name="Liu S.-M."/>
            <person name="Chang C.-C."/>
            <person name="Chaw S.-M."/>
        </authorList>
    </citation>
    <scope>NUCLEOTIDE SEQUENCE [LARGE SCALE GENOMIC DNA]</scope>
    <source>
        <strain>cv. Taisugar TS-97</strain>
    </source>
</reference>